<evidence type="ECO:0000269" key="1">
    <source>
    </source>
</evidence>
<evidence type="ECO:0000269" key="2">
    <source>
    </source>
</evidence>
<evidence type="ECO:0000269" key="3">
    <source>
    </source>
</evidence>
<evidence type="ECO:0000269" key="4">
    <source>
    </source>
</evidence>
<evidence type="ECO:0000269" key="5">
    <source>
    </source>
</evidence>
<evidence type="ECO:0000269" key="6">
    <source>
    </source>
</evidence>
<evidence type="ECO:0000269" key="7">
    <source>
    </source>
</evidence>
<evidence type="ECO:0000269" key="8">
    <source>
    </source>
</evidence>
<evidence type="ECO:0000269" key="9">
    <source>
    </source>
</evidence>
<evidence type="ECO:0000269" key="10">
    <source>
    </source>
</evidence>
<evidence type="ECO:0000269" key="11">
    <source>
    </source>
</evidence>
<evidence type="ECO:0000269" key="12">
    <source>
    </source>
</evidence>
<evidence type="ECO:0000269" key="13">
    <source>
    </source>
</evidence>
<evidence type="ECO:0000269" key="14">
    <source>
    </source>
</evidence>
<evidence type="ECO:0000269" key="15">
    <source>
    </source>
</evidence>
<evidence type="ECO:0000303" key="16">
    <source>
    </source>
</evidence>
<evidence type="ECO:0000305" key="17">
    <source>
    </source>
</evidence>
<evidence type="ECO:0000305" key="18">
    <source>
    </source>
</evidence>
<evidence type="ECO:0007744" key="19">
    <source>
        <dbReference type="PDB" id="2V79"/>
    </source>
</evidence>
<evidence type="ECO:0007744" key="20">
    <source>
        <dbReference type="PDB" id="8OJJ"/>
    </source>
</evidence>
<evidence type="ECO:0007829" key="21">
    <source>
        <dbReference type="PDB" id="2V79"/>
    </source>
</evidence>
<protein>
    <recommendedName>
        <fullName>Replicative helicase loading/DNA remodeling protein DnaD</fullName>
    </recommendedName>
</protein>
<feature type="chain" id="PRO_0000079958" description="Replicative helicase loading/DNA remodeling protein DnaD">
    <location>
        <begin position="1"/>
        <end position="232"/>
    </location>
</feature>
<feature type="region of interest" description="DDBH1" evidence="17">
    <location>
        <begin position="1"/>
        <end position="116"/>
    </location>
</feature>
<feature type="region of interest" description="N-terminal domain" evidence="18">
    <location>
        <begin position="1"/>
        <end position="98"/>
    </location>
</feature>
<feature type="region of interest" description="C-terminal domain" evidence="18">
    <location>
        <begin position="99"/>
        <end position="205"/>
    </location>
</feature>
<feature type="region of interest" description="DDBH2" evidence="17">
    <location>
        <begin position="131"/>
        <end position="200"/>
    </location>
</feature>
<feature type="region of interest" description="C-terminal tail" evidence="18">
    <location>
        <begin position="206"/>
        <end position="232"/>
    </location>
</feature>
<feature type="mutagenesis site" description="Lethal in vivo, poorly expressed, forms dimers but not tetramers." evidence="13">
    <original>K</original>
    <variation>A</variation>
    <location>
        <position position="3"/>
    </location>
</feature>
<feature type="mutagenesis site" description="Lethal in vivo, no DNA replication initiation, forms dimers but not tetramers, still interacts with DnaB. Does not bind DRE in ssDNA." evidence="13 14">
    <original>F</original>
    <variation>A</variation>
    <location>
        <position position="6"/>
    </location>
</feature>
<feature type="mutagenesis site" description="Lethal in vivo, no DNA replication initiation, poor dimer formation, loss of interaction with DnaB. Does not bind DRE in ssDNA." evidence="13 14">
    <original>L</original>
    <variation>A</variation>
    <location>
        <position position="22"/>
    </location>
</feature>
<feature type="mutagenesis site" description="Lethal in vivo, no DNA replication initiation, loss of interaction with DnaA." evidence="13">
    <original>F</original>
    <variation>A</variation>
    <location>
        <position position="51"/>
    </location>
</feature>
<feature type="mutagenesis site" description="Lethal in vivo, no DNA replication initiation, loss of interaction with DnaA." evidence="13">
    <original>P</original>
    <variation>A</variation>
    <location>
        <position position="54"/>
    </location>
</feature>
<feature type="mutagenesis site" description="Lethal in vivo, no DNA replication initiation, loss of interaction with DnaA." evidence="13">
    <original>I</original>
    <variation>A</variation>
    <location>
        <position position="83"/>
    </location>
</feature>
<feature type="mutagenesis site" description="Lethal in vivo, no DNA replication initiation, loss of interaction with DnaA." evidence="13">
    <original>I</original>
    <variation>A</variation>
    <location>
        <position position="92"/>
    </location>
</feature>
<feature type="mutagenesis site" description="Lethal in vivo, no DNA replication initiation, loss of interaction with DnaA." evidence="13">
    <original>E</original>
    <variation>A</variation>
    <location>
        <position position="95"/>
    </location>
</feature>
<feature type="mutagenesis site" description="In dnaD326; suppresses temperature sensitivity of dnaD23 at 51 degrees Celsius, restores DnaD protein levels at 30 and 50 degrees Celsius." evidence="5">
    <location>
        <begin position="155"/>
        <end position="156"/>
    </location>
</feature>
<feature type="mutagenesis site" description="In dnaD23; temperature-sensitive mutant that affects the initiation of chromosome replication. 5-fold decrease in abundance at 30 degrees Celsius, protein is detectable at 50 degrees Celsius, decreased and temperature-sensitive ssDNA-binding. Loss of association of DnaB, DnaC or DnaD with oriC at 52 degrees Celsius." evidence="2 5 9 15">
    <original>A</original>
    <variation>T</variation>
    <location>
        <position position="166"/>
    </location>
</feature>
<feature type="mutagenesis site" description="Decreased DNA-binding, complements temperature sensitivity of dnaD23 in vivo, no growth defect upon overexpression." evidence="11">
    <original>Y</original>
    <variation>A</variation>
    <location>
        <position position="180"/>
    </location>
</feature>
<feature type="mutagenesis site" description="Decreased DNA-binding, complements temperature sensitivity of dnaD23 in vivo, no growth defect upon overexpression." evidence="11">
    <original>W</original>
    <variation>A</variation>
    <location>
        <position position="188"/>
    </location>
</feature>
<feature type="mutagenesis site" description="In dnaD325 and dnaD321 respectively; suppresses temperature sensitivity of dnaD23 at 51 degrees Celsius, restores DnaD protein levels at 30 and 50 degrees Celsius." evidence="5">
    <original>L</original>
    <variation>I</variation>
    <variation>V</variation>
    <location>
        <position position="193"/>
    </location>
</feature>
<feature type="mutagenesis site" description="Does not complement temperature sensitivity of dnaD23 in vivo." evidence="11">
    <location>
        <begin position="197"/>
        <end position="232"/>
    </location>
</feature>
<feature type="mutagenesis site" description="Lethal in vivo, under-initiates DNA replication, nucleoids shrink and fewer of them replicate DNA, cells elongate and inititate a DNA-damage response, loss of ssDNA-binding." evidence="14">
    <original>KFRRVQAKQNEPQKEYKR</original>
    <variation>AAAAVQAKQNEPQAEYAA</variation>
    <location>
        <begin position="205"/>
        <end position="222"/>
    </location>
</feature>
<feature type="mutagenesis site" description="Loss of interaction with DnaB. Still binds ssDNA." evidence="13 14">
    <location>
        <begin position="225"/>
        <end position="232"/>
    </location>
</feature>
<feature type="mutagenesis site" description="Lethal in vivo, no DNA replication initiation, reduced interaction with DnaB." evidence="13">
    <original>W</original>
    <variation>A</variation>
    <location>
        <position position="229"/>
    </location>
</feature>
<feature type="helix" evidence="21">
    <location>
        <begin position="3"/>
        <end position="12"/>
    </location>
</feature>
<feature type="strand" evidence="21">
    <location>
        <begin position="14"/>
        <end position="18"/>
    </location>
</feature>
<feature type="helix" evidence="21">
    <location>
        <begin position="19"/>
        <end position="28"/>
    </location>
</feature>
<feature type="helix" evidence="21">
    <location>
        <begin position="32"/>
        <end position="45"/>
    </location>
</feature>
<feature type="turn" evidence="21">
    <location>
        <begin position="46"/>
        <end position="48"/>
    </location>
</feature>
<feature type="helix" evidence="21">
    <location>
        <begin position="54"/>
        <end position="58"/>
    </location>
</feature>
<feature type="strand" evidence="21">
    <location>
        <begin position="61"/>
        <end position="63"/>
    </location>
</feature>
<feature type="helix" evidence="21">
    <location>
        <begin position="65"/>
        <end position="78"/>
    </location>
</feature>
<feature type="strand" evidence="21">
    <location>
        <begin position="82"/>
        <end position="87"/>
    </location>
</feature>
<feature type="strand" evidence="21">
    <location>
        <begin position="93"/>
        <end position="98"/>
    </location>
</feature>
<feature type="helix" evidence="21">
    <location>
        <begin position="100"/>
        <end position="114"/>
    </location>
</feature>
<organism>
    <name type="scientific">Bacillus subtilis (strain 168)</name>
    <dbReference type="NCBI Taxonomy" id="224308"/>
    <lineage>
        <taxon>Bacteria</taxon>
        <taxon>Bacillati</taxon>
        <taxon>Bacillota</taxon>
        <taxon>Bacilli</taxon>
        <taxon>Bacillales</taxon>
        <taxon>Bacillaceae</taxon>
        <taxon>Bacillus</taxon>
    </lineage>
</organism>
<dbReference type="EMBL" id="U11289">
    <property type="protein sequence ID" value="AAA80004.1"/>
    <property type="molecule type" value="Genomic_DNA"/>
</dbReference>
<dbReference type="EMBL" id="L47709">
    <property type="protein sequence ID" value="AAB38456.1"/>
    <property type="molecule type" value="Genomic_DNA"/>
</dbReference>
<dbReference type="EMBL" id="AL009126">
    <property type="protein sequence ID" value="CAB14151.1"/>
    <property type="molecule type" value="Genomic_DNA"/>
</dbReference>
<dbReference type="PIR" id="I40524">
    <property type="entry name" value="I40524"/>
</dbReference>
<dbReference type="RefSeq" id="NP_390116.1">
    <property type="nucleotide sequence ID" value="NC_000964.3"/>
</dbReference>
<dbReference type="RefSeq" id="WP_004398499.1">
    <property type="nucleotide sequence ID" value="NZ_OZ025638.1"/>
</dbReference>
<dbReference type="PDB" id="2V79">
    <property type="method" value="X-ray"/>
    <property type="resolution" value="2.00 A"/>
    <property type="chains" value="A/B=1-127"/>
</dbReference>
<dbReference type="PDB" id="8OJJ">
    <property type="method" value="EM"/>
    <property type="resolution" value="5.47 A"/>
    <property type="chains" value="A/B/C/D=1-232"/>
</dbReference>
<dbReference type="PDBsum" id="2V79"/>
<dbReference type="PDBsum" id="8OJJ"/>
<dbReference type="EMDB" id="EMD-16914"/>
<dbReference type="SMR" id="P39787"/>
<dbReference type="FunCoup" id="P39787">
    <property type="interactions" value="20"/>
</dbReference>
<dbReference type="IntAct" id="P39787">
    <property type="interactions" value="1"/>
</dbReference>
<dbReference type="STRING" id="224308.BSU22350"/>
<dbReference type="PaxDb" id="224308-BSU22350"/>
<dbReference type="EnsemblBacteria" id="CAB14151">
    <property type="protein sequence ID" value="CAB14151"/>
    <property type="gene ID" value="BSU_22350"/>
</dbReference>
<dbReference type="GeneID" id="939040"/>
<dbReference type="KEGG" id="bsu:BSU22350"/>
<dbReference type="eggNOG" id="COG3935">
    <property type="taxonomic scope" value="Bacteria"/>
</dbReference>
<dbReference type="InParanoid" id="P39787"/>
<dbReference type="OrthoDB" id="9770238at2"/>
<dbReference type="PhylomeDB" id="P39787"/>
<dbReference type="BioCyc" id="BSUB:BSU22350-MONOMER"/>
<dbReference type="EvolutionaryTrace" id="P39787"/>
<dbReference type="Proteomes" id="UP000001570">
    <property type="component" value="Chromosome"/>
</dbReference>
<dbReference type="GO" id="GO:1990077">
    <property type="term" value="C:primosome complex"/>
    <property type="evidence" value="ECO:0007669"/>
    <property type="project" value="UniProtKB-KW"/>
</dbReference>
<dbReference type="GO" id="GO:0006269">
    <property type="term" value="P:DNA replication, synthesis of primer"/>
    <property type="evidence" value="ECO:0007669"/>
    <property type="project" value="UniProtKB-KW"/>
</dbReference>
<dbReference type="Gene3D" id="1.10.10.630">
    <property type="entry name" value="DnaD domain-like"/>
    <property type="match status" value="1"/>
</dbReference>
<dbReference type="Gene3D" id="1.10.10.10">
    <property type="entry name" value="Winged helix-like DNA-binding domain superfamily/Winged helix DNA-binding domain"/>
    <property type="match status" value="1"/>
</dbReference>
<dbReference type="InterPro" id="IPR053162">
    <property type="entry name" value="DNA_Replication_Initiator"/>
</dbReference>
<dbReference type="InterPro" id="IPR034829">
    <property type="entry name" value="DnaD-like_sf"/>
</dbReference>
<dbReference type="InterPro" id="IPR006343">
    <property type="entry name" value="DnaD_dom"/>
</dbReference>
<dbReference type="InterPro" id="IPR053843">
    <property type="entry name" value="DnaD_N"/>
</dbReference>
<dbReference type="InterPro" id="IPR036388">
    <property type="entry name" value="WH-like_DNA-bd_sf"/>
</dbReference>
<dbReference type="NCBIfam" id="TIGR01446">
    <property type="entry name" value="DnaD_dom"/>
    <property type="match status" value="1"/>
</dbReference>
<dbReference type="PANTHER" id="PTHR37293:SF6">
    <property type="entry name" value="DNA REPLICATION PROTEIN DNAD"/>
    <property type="match status" value="1"/>
</dbReference>
<dbReference type="PANTHER" id="PTHR37293">
    <property type="entry name" value="PHAGE REPLICATION PROTEIN-RELATED"/>
    <property type="match status" value="1"/>
</dbReference>
<dbReference type="Pfam" id="PF07261">
    <property type="entry name" value="DnaB_2"/>
    <property type="match status" value="1"/>
</dbReference>
<dbReference type="Pfam" id="PF21984">
    <property type="entry name" value="DnaD_N"/>
    <property type="match status" value="1"/>
</dbReference>
<dbReference type="SUPFAM" id="SSF158499">
    <property type="entry name" value="DnaD domain-like"/>
    <property type="match status" value="1"/>
</dbReference>
<gene>
    <name evidence="16" type="primary">dnaD</name>
    <name type="ordered locus">BSU22350</name>
</gene>
<comment type="function">
    <text evidence="1 2 3 4 5 6 9 11 12 13 14">Required to load replicative helicase DnaC onto replication forks. Binds to a DnaD recognition element (DRE) which has pairs of 5'-TnnT-3' motifs; there is a strong DRE at oriC opposite the DnaA-trios recognized by DnaA (PubMed:37093985). During DNA replication from the origin of replication (oriC) in the DNA replisome, DnaD is required after DnaA, before DnaB and subsequent helicase DnaC loading (PubMed:15186423, PubMed:19968790). A component of the replication restart primosome, which reloads the replicative helicase on sites other than oriC (PubMed:11585815). DnaB, DnaD and DnaI may also be required for a PriA-independent pathway of replication fork restart (PubMed:11679082). DnaB and DnaD work together to allow DnaB access to single-stranded (ss)DNA (PubMed:15686560). Has DNA remodeling activity that converts supercoiled plasmid into an open circular form; DnaD forms scaffolds inside the plasmid DNA (PubMed:15556628, PubMed:16002087). Plasmid relaxation incorporates both wrapping around the DnaD protein scaffold and simultaneous untwisting, no nicking of the DNA is seen (PubMed:16002087). Also converts linear DNA into an open circular form (PubMed:16002087). Disrupts a replicative helicase-DnaI complex (PubMed:15556628). Inhibits the ability of DnaA-ATP to form a helix on DNA; does not disassemble preformed helices in vitro (PubMed:23909787). Binds ssDNA (PubMed:11585815, PubMed:15556628, PubMed:15686560, PubMed:20587500, PubMed:37093985), and replication fork-like substrates (PubMed:11585815), supercoiled plasmid (PubMed:20587500), but not stably to short double-stranded (ds)DNA (PubMed:11585815, PubMed:37093985). DnaD stimulates DnaB DNA-binding activities (PubMed:11585815). DnaB and DnaD are required to load helicase on the repN plasmid origin of replication (oriN) (PubMed:36416272). Causes a severe growth defect upon overexpression even in an oriC-independent strain (PubMed:20587500).</text>
</comment>
<comment type="activity regulation">
    <text evidence="13">Recruitment to oriC requires DnaA but not DnaB, DnaC or DnaI (PubMed:19968790, PubMed:36416272) and is blocked by SirA (PubMed:36416272).</text>
</comment>
<comment type="subunit">
    <text evidence="1 3 4 5 6 7 8 9 13 14">The DNA replisome assembles sequentially on oriC in this order; DnaA, DnaD, DnaB, DnaI-DnaC helicase (PubMed:19968790). Homodimer (PubMed:11585815, PubMed:15686560, PubMed:18206906). Homotetramer (PubMed:36416272, PubMed:37093985). Oligomerization in vitro is concentration dependent (PubMed:15556628, PubMed:16002087). Part of the replication restart primosome which assembles in this order; PriA, DnaD then DnaB. The preferred DNA substrate mimics an arrested DNA replication fork with unreplicated lagging strand (PubMed:11585815). Interacts with DnaA (PubMed:18506095, PubMed:36416272), DnaB (PubMed:15186423, PubMed:15686560, PubMed:36416272) and PriA (PubMed:15686560). Interaction with DnaB requires DnaD to dimerize (PubMed:36416272).</text>
</comment>
<comment type="subcellular location">
    <subcellularLocation>
        <location evidence="3">Cytoplasm</location>
    </subcellularLocation>
    <text evidence="3">In strains with the dnaB75 ('S371P') allele about 15% of protein is associated with the cell membrane (PubMed:15186423).</text>
</comment>
<comment type="induction">
    <text evidence="10">Transcribed at constant levels during exponential growth.</text>
</comment>
<comment type="domain">
    <text evidence="7 13 14">The N-terminus (residues 1-127) forms a winged-helix with N- and C-terminal extensions (PubMed:18206906). The N-terminus mediates oligomerization; at least dimer formation is required for interaction with DnaB (PubMed:36416272). The N-terminus also mediates interaction with DnaA (PubMed:36416272). The C-terminal tail mediates interaction with DnaB (PubMed:36416272) and with ssDNA of the DnaD recognition element (DRE) (PubMed:37093985). Has 2 domains with homology to DnaB called DDBH1 and DDBH2 (DnaD DnaB Homology 1 and 2) (PubMed:20587500). Internal fragments (residues 129-196 and 129-206) do not bind supercoiled plasmid DNA while a slightly longer fragment (residues 129-215) does (PubMed:20587500). Deletion of the C-terminal tail (residues 197-232) is lethal in vivo, probably due to loss of DNA-binding (PubMed:20587500).</text>
</comment>
<comment type="disruption phenotype">
    <text evidence="5 13 14">Essential, it cannot be deleted (PubMed:36416272, PubMed:37093985) even in the presence of its loss-of-function suppressor dnaB75 (PubMed:15686560). In depletion experiments DNA replication slows as soon as the protein is degraded and replication stops by 1 hour (PubMed:19968790). Very low level support growth (PubMed:37093985).</text>
</comment>
<comment type="miscellaneous">
    <text evidence="5">There are 3000-5000 molecules per cell at 30 or 50 degrees Celsius.</text>
</comment>
<comment type="similarity">
    <text evidence="17">Belongs to the DnaB/DnaD family.</text>
</comment>
<proteinExistence type="evidence at protein level"/>
<keyword id="KW-0002">3D-structure</keyword>
<keyword id="KW-0963">Cytoplasm</keyword>
<keyword id="KW-0235">DNA replication</keyword>
<keyword id="KW-0238">DNA-binding</keyword>
<keyword id="KW-0639">Primosome</keyword>
<keyword id="KW-1185">Reference proteome</keyword>
<name>DNAD_BACSU</name>
<accession>P39787</accession>
<reference key="1">
    <citation type="journal article" date="1995" name="Microbiology">
        <title>Nucleotide sequence of the Bacillus subtilis dnaD gene.</title>
        <authorList>
            <person name="Bruand C."/>
            <person name="Sorokin A."/>
            <person name="Serror P."/>
            <person name="Ehrlich S.D."/>
        </authorList>
    </citation>
    <scope>NUCLEOTIDE SEQUENCE [GENOMIC DNA]</scope>
    <scope>MUTAGENESIS OF ALA-166</scope>
    <source>
        <strain>168</strain>
    </source>
</reference>
<reference key="2">
    <citation type="journal article" date="1996" name="Microbiology">
        <title>Sequence analysis of the Bacillus subtilis chromosome region between the serA and kdg loci cloned in a yeast artificial chromosome.</title>
        <authorList>
            <person name="Sorokin A.V."/>
            <person name="Azevedo V."/>
            <person name="Zumstein E."/>
            <person name="Galleron N."/>
            <person name="Ehrlich S.D."/>
            <person name="Serror P."/>
        </authorList>
    </citation>
    <scope>NUCLEOTIDE SEQUENCE [GENOMIC DNA]</scope>
    <source>
        <strain>168 / Marburg / ATCC 6051 / DSM 10 / JCM 1465 / NBRC 13719 / NCIMB 3610 / NRRL NRS-744 / VKM B-501</strain>
    </source>
</reference>
<reference key="3">
    <citation type="journal article" date="1997" name="Nature">
        <title>The complete genome sequence of the Gram-positive bacterium Bacillus subtilis.</title>
        <authorList>
            <person name="Kunst F."/>
            <person name="Ogasawara N."/>
            <person name="Moszer I."/>
            <person name="Albertini A.M."/>
            <person name="Alloni G."/>
            <person name="Azevedo V."/>
            <person name="Bertero M.G."/>
            <person name="Bessieres P."/>
            <person name="Bolotin A."/>
            <person name="Borchert S."/>
            <person name="Borriss R."/>
            <person name="Boursier L."/>
            <person name="Brans A."/>
            <person name="Braun M."/>
            <person name="Brignell S.C."/>
            <person name="Bron S."/>
            <person name="Brouillet S."/>
            <person name="Bruschi C.V."/>
            <person name="Caldwell B."/>
            <person name="Capuano V."/>
            <person name="Carter N.M."/>
            <person name="Choi S.-K."/>
            <person name="Codani J.-J."/>
            <person name="Connerton I.F."/>
            <person name="Cummings N.J."/>
            <person name="Daniel R.A."/>
            <person name="Denizot F."/>
            <person name="Devine K.M."/>
            <person name="Duesterhoeft A."/>
            <person name="Ehrlich S.D."/>
            <person name="Emmerson P.T."/>
            <person name="Entian K.-D."/>
            <person name="Errington J."/>
            <person name="Fabret C."/>
            <person name="Ferrari E."/>
            <person name="Foulger D."/>
            <person name="Fritz C."/>
            <person name="Fujita M."/>
            <person name="Fujita Y."/>
            <person name="Fuma S."/>
            <person name="Galizzi A."/>
            <person name="Galleron N."/>
            <person name="Ghim S.-Y."/>
            <person name="Glaser P."/>
            <person name="Goffeau A."/>
            <person name="Golightly E.J."/>
            <person name="Grandi G."/>
            <person name="Guiseppi G."/>
            <person name="Guy B.J."/>
            <person name="Haga K."/>
            <person name="Haiech J."/>
            <person name="Harwood C.R."/>
            <person name="Henaut A."/>
            <person name="Hilbert H."/>
            <person name="Holsappel S."/>
            <person name="Hosono S."/>
            <person name="Hullo M.-F."/>
            <person name="Itaya M."/>
            <person name="Jones L.-M."/>
            <person name="Joris B."/>
            <person name="Karamata D."/>
            <person name="Kasahara Y."/>
            <person name="Klaerr-Blanchard M."/>
            <person name="Klein C."/>
            <person name="Kobayashi Y."/>
            <person name="Koetter P."/>
            <person name="Koningstein G."/>
            <person name="Krogh S."/>
            <person name="Kumano M."/>
            <person name="Kurita K."/>
            <person name="Lapidus A."/>
            <person name="Lardinois S."/>
            <person name="Lauber J."/>
            <person name="Lazarevic V."/>
            <person name="Lee S.-M."/>
            <person name="Levine A."/>
            <person name="Liu H."/>
            <person name="Masuda S."/>
            <person name="Mauel C."/>
            <person name="Medigue C."/>
            <person name="Medina N."/>
            <person name="Mellado R.P."/>
            <person name="Mizuno M."/>
            <person name="Moestl D."/>
            <person name="Nakai S."/>
            <person name="Noback M."/>
            <person name="Noone D."/>
            <person name="O'Reilly M."/>
            <person name="Ogawa K."/>
            <person name="Ogiwara A."/>
            <person name="Oudega B."/>
            <person name="Park S.-H."/>
            <person name="Parro V."/>
            <person name="Pohl T.M."/>
            <person name="Portetelle D."/>
            <person name="Porwollik S."/>
            <person name="Prescott A.M."/>
            <person name="Presecan E."/>
            <person name="Pujic P."/>
            <person name="Purnelle B."/>
            <person name="Rapoport G."/>
            <person name="Rey M."/>
            <person name="Reynolds S."/>
            <person name="Rieger M."/>
            <person name="Rivolta C."/>
            <person name="Rocha E."/>
            <person name="Roche B."/>
            <person name="Rose M."/>
            <person name="Sadaie Y."/>
            <person name="Sato T."/>
            <person name="Scanlan E."/>
            <person name="Schleich S."/>
            <person name="Schroeter R."/>
            <person name="Scoffone F."/>
            <person name="Sekiguchi J."/>
            <person name="Sekowska A."/>
            <person name="Seror S.J."/>
            <person name="Serror P."/>
            <person name="Shin B.-S."/>
            <person name="Soldo B."/>
            <person name="Sorokin A."/>
            <person name="Tacconi E."/>
            <person name="Takagi T."/>
            <person name="Takahashi H."/>
            <person name="Takemaru K."/>
            <person name="Takeuchi M."/>
            <person name="Tamakoshi A."/>
            <person name="Tanaka T."/>
            <person name="Terpstra P."/>
            <person name="Tognoni A."/>
            <person name="Tosato V."/>
            <person name="Uchiyama S."/>
            <person name="Vandenbol M."/>
            <person name="Vannier F."/>
            <person name="Vassarotti A."/>
            <person name="Viari A."/>
            <person name="Wambutt R."/>
            <person name="Wedler E."/>
            <person name="Wedler H."/>
            <person name="Weitzenegger T."/>
            <person name="Winters P."/>
            <person name="Wipat A."/>
            <person name="Yamamoto H."/>
            <person name="Yamane K."/>
            <person name="Yasumoto K."/>
            <person name="Yata K."/>
            <person name="Yoshida K."/>
            <person name="Yoshikawa H.-F."/>
            <person name="Zumstein E."/>
            <person name="Yoshikawa H."/>
            <person name="Danchin A."/>
        </authorList>
    </citation>
    <scope>NUCLEOTIDE SEQUENCE [LARGE SCALE GENOMIC DNA]</scope>
    <source>
        <strain>168</strain>
    </source>
</reference>
<reference key="4">
    <citation type="journal article" date="2001" name="J. Biol. Chem.">
        <title>Early steps of Bacillus subtilis primosome assembly.</title>
        <authorList>
            <person name="Marsin S."/>
            <person name="McGovern S."/>
            <person name="Ehrlich S.D."/>
            <person name="Bruand C."/>
            <person name="Polard P."/>
        </authorList>
    </citation>
    <scope>FUNCTION IN REPLICATION RESTART</scope>
    <scope>SUBUNIT</scope>
    <scope>DNA-BINDING</scope>
    <source>
        <strain>168</strain>
    </source>
</reference>
<reference key="5">
    <citation type="journal article" date="2001" name="Mol. Microbiol.">
        <title>DnaB, DnaD and DnaI proteins are components of the Bacillus subtilis replication restart primosome.</title>
        <authorList>
            <person name="Bruand C."/>
            <person name="Farache M."/>
            <person name="McGovern S."/>
            <person name="Ehrlich S.D."/>
            <person name="Polard P."/>
        </authorList>
    </citation>
    <scope>FUNCTION</scope>
    <scope>MUTAGENESIS OF ALA-166</scope>
</reference>
<reference key="6">
    <citation type="journal article" date="2004" name="Mol. Microbiol.">
        <title>Control of DNA replication initiation by recruitment of an essential initiation protein to the membrane of Bacillus subtilis.</title>
        <authorList>
            <person name="Rokop M.E."/>
            <person name="Auchtung J.M."/>
            <person name="Grossman A.D."/>
        </authorList>
    </citation>
    <scope>FUNCTION</scope>
    <scope>SUBUNIT</scope>
    <scope>INTERACTION WITH DNAB</scope>
    <scope>SUBCELLULAR LOCATION</scope>
</reference>
<reference key="7">
    <citation type="journal article" date="2004" name="FEBS Lett.">
        <title>The Bacillus subtilis DnaD protein: a putative link between DNA remodeling and initiation of DNA replication.</title>
        <authorList>
            <person name="Turner I.J."/>
            <person name="Scott D.J."/>
            <person name="Allen S."/>
            <person name="Roberts C.J."/>
            <person name="Soultanas P."/>
        </authorList>
    </citation>
    <scope>FUNCTION</scope>
    <scope>SUBUNIT</scope>
    <scope>DNA-BINDING</scope>
    <source>
        <strain>168 / EMG50</strain>
    </source>
</reference>
<reference key="8">
    <citation type="journal article" date="2005" name="Mol. Microbiol.">
        <title>Functional interplay between the Bacillus subtilis DnaD and DnaB proteins essential for initiation and re-initiation of DNA replication.</title>
        <authorList>
            <person name="Bruand C."/>
            <person name="Velten M."/>
            <person name="McGovern S."/>
            <person name="Marsin S."/>
            <person name="Serena C."/>
            <person name="Ehrlich S.D."/>
            <person name="Polard P."/>
        </authorList>
    </citation>
    <scope>FUNCTION</scope>
    <scope>SUBUNIT</scope>
    <scope>INTERACTION WITH DNAB AND PRIA</scope>
    <scope>DISRUPTION PHENOTYPE</scope>
    <scope>PROTEIN ABUNDANCE</scope>
    <scope>DNA-BINDING</scope>
    <scope>MUTAGENESIS OF 155-GLN-ASP-156 AND LEU-193</scope>
    <source>
        <strain>168</strain>
    </source>
</reference>
<reference key="9">
    <citation type="journal article" date="2005" name="J. Mol. Biol.">
        <title>The Bacillus subtilis DnaD and DnaB proteins exhibit different DNA remodelling activities.</title>
        <authorList>
            <person name="Zhang W."/>
            <person name="Carneiro M.J."/>
            <person name="Turner I.J."/>
            <person name="Allen S."/>
            <person name="Roberts C.J."/>
            <person name="Soultanas P."/>
        </authorList>
    </citation>
    <scope>FUNCTION</scope>
    <scope>SUBUNIT</scope>
    <scope>DNA-BINDING</scope>
    <source>
        <strain>168 / EMG50</strain>
    </source>
</reference>
<reference key="10">
    <citation type="journal article" date="2008" name="Genes Genet. Syst.">
        <title>The functional analysis of YabA, which interacts with DnaA and regulates initiation of chromosome replication in Bacillus subtils.</title>
        <authorList>
            <person name="Cho E."/>
            <person name="Ogasawara N."/>
            <person name="Ishikawa S."/>
        </authorList>
    </citation>
    <scope>INTERACTION WITH DNAA</scope>
    <source>
        <strain>CRK6000</strain>
    </source>
</reference>
<reference key="11">
    <citation type="journal article" date="2010" name="Mol. Microbiol.">
        <title>Ordered association of helicase loader proteins with the Bacillus subtilis origin of replication in vivo.</title>
        <authorList>
            <person name="Smits W.K."/>
            <person name="Goranov A.I."/>
            <person name="Grossman A.D."/>
        </authorList>
    </citation>
    <scope>FUNCTION</scope>
    <scope>DNA REPLISOME ASSEMBLY</scope>
    <scope>DISRUPTION PHENOTYPE</scope>
    <scope>MUTAGENESIS OF ALA-166</scope>
</reference>
<reference key="12">
    <citation type="journal article" date="2010" name="Nucleic Acids Res.">
        <title>DnaB proteolysis in vivo regulates oligomerization and its localization at oriC in Bacillus subtilis.</title>
        <authorList>
            <person name="Grainger W.H."/>
            <person name="Machon C."/>
            <person name="Scott D.J."/>
            <person name="Soultanas P."/>
        </authorList>
    </citation>
    <scope>INDUCTION</scope>
    <source>
        <strain>168</strain>
    </source>
</reference>
<reference key="13">
    <citation type="journal article" date="2010" name="Nucleic Acids Res.">
        <title>When simple sequence comparison fails: the cryptic case of the shared domains of the bacterial replication initiation proteins DnaB and DnaD.</title>
        <authorList>
            <person name="Marston F.Y."/>
            <person name="Grainger W.H."/>
            <person name="Smits W.K."/>
            <person name="Hopcroft N.H."/>
            <person name="Green M."/>
            <person name="Hounslow A.M."/>
            <person name="Grossman A.D."/>
            <person name="Craven C.J."/>
            <person name="Soultanas P."/>
        </authorList>
    </citation>
    <scope>FUNCTION</scope>
    <scope>SIMILARITY WITH DNAB</scope>
    <scope>DOMAIN</scope>
    <scope>DNA-BINDING</scope>
    <scope>MUTAGENESIS OF TYR-180; TRP-188 AND 197-GLU--GLN-232</scope>
</reference>
<reference key="14">
    <citation type="journal article" date="2013" name="Mol. Microbiol.">
        <title>YabA and DnaD inhibit helix assembly of the DNA replication initiation protein DnaA.</title>
        <authorList>
            <person name="Scholefield G."/>
            <person name="Murray H."/>
        </authorList>
    </citation>
    <scope>FUNCTION</scope>
    <source>
        <strain>168</strain>
    </source>
</reference>
<reference key="15">
    <citation type="journal article" date="2023" name="Nucleic Acids Res.">
        <title>SirA inhibits the essential DnaA:DnaD interaction to block helicase recruitment during Bacillus subtilis sporulation.</title>
        <authorList>
            <person name="Winterhalter C."/>
            <person name="Stevens D."/>
            <person name="Fenyk S."/>
            <person name="Pelliciari S."/>
            <person name="Marchand E."/>
            <person name="Soultanas P."/>
            <person name="Ilangovan A."/>
            <person name="Murray H."/>
        </authorList>
    </citation>
    <scope>FUNCTION</scope>
    <scope>ACTIVITY REGULATION</scope>
    <scope>SUBUNIT</scope>
    <scope>INTERACTION WITH DNAA</scope>
    <scope>INTERACTION WITH DNAB</scope>
    <scope>DOMAIN</scope>
    <scope>DISRUPTION PHENOTYPE</scope>
    <scope>MUTAGENESIS OF LYS-3; PHE-6; LEU-22; PHE-51; PRO-54; ILE-83; ILE-92; GLU-95; 225-PRO--GLN-232 AND TRP-229</scope>
</reference>
<reference evidence="19" key="16">
    <citation type="journal article" date="2008" name="J. Mol. Biol.">
        <title>Structure of the N-terminal oligomerization domain of DnaD reveals a unique tetramerization motif and provides insights into scaffold formation.</title>
        <authorList>
            <person name="Schneider S."/>
            <person name="Zhang W."/>
            <person name="Soultanas P."/>
            <person name="Paoli M."/>
        </authorList>
    </citation>
    <scope>X-RAY CRYSTALLOGRAPHY (2.00 ANGSTROMS) OF 1-127</scope>
    <scope>SUBUNIT</scope>
    <scope>DOMAIN</scope>
</reference>
<reference evidence="20" key="17">
    <citation type="journal article" date="2023" name="Nucleic Acids Res.">
        <title>The DNA replication initiation protein DnaD recognises a specific strand of the Bacillus subtilis chromosome origin.</title>
        <authorList>
            <person name="Winterhalter C."/>
            <person name="Pelliciari S."/>
            <person name="Stevens D."/>
            <person name="Fenyk S."/>
            <person name="Marchand E."/>
            <person name="Cronin N.B."/>
            <person name="Soultanas P."/>
            <person name="Costa T.R.D."/>
            <person name="Ilangovan A."/>
            <person name="Murray H."/>
        </authorList>
    </citation>
    <scope>STRUCTURE BY ELECTRON MICROSCOPY (5.47 ANGSTROMS)</scope>
    <scope>FUNCTION IN DNA REPLICATION</scope>
    <scope>SUBUNIT</scope>
    <scope>DOMAIN</scope>
    <scope>DISRUPTION PHENOTYPE</scope>
    <scope>DNA-BINDING</scope>
    <scope>MUTAGENESIS OF PHE-6; LEU-22; 205-LYS--ARG-222 AND 225-PRO--GLN-232</scope>
</reference>
<sequence>MKKQQFIDMQEQGTSTIPNLLLTHYKQLGLNETELILLLKIKMHLEKGSYFPTPNQLQEGMSISVEECTNRLRMFIQKGFLFIEECEDQNGIKFEKYSLQPLWGKLYEYIQLAQNQTQERKAEGEQKSLYTIFEEEFARPLSPLECETLAIWQDQDQHDAQLIKHALKEAVLSGKLSFRYIDRILFEWKKNGLKTVEQAKIHSQKFRRVQAKQNEPQKEYKRQVPFYNWLEQ</sequence>